<accession>Q02837</accession>
<sequence length="854" mass="96856">MGRLLIKILIIAIGISIGIGNLYVTVFYGIPVWKNSTVQAFCMTPNTNMWATTNCIPDDHDNTEVPLNITEAFEAWDNPLVKQAESNIHLLFEQTMRPCVKLSPICIKMSCVELNGTATTKATTTATTTMTTPCQNCSTEQIEGEMAEEPASNCTFAIAGYQRDVKKNYSMTWYDQELVCNNKTGSEKGSKDCYMIHCNDSVIKEACDKTYWDTLRVRYCAPAGYALLKCNDKDYRGFAPKCKNVSVVHCTRLINTTITTGIGLNGSRSENRTEIWQKGGNDNDTVIIKLNKFYNLTVRCRRPGNKTVLPVTIMAGLVFHSQKYNTRLKQAWCHFQGDWKGAWKEVREEVKKVKNLTEVSIENIHLRRIWGDPESANFWFNCQGEFFYCKMDWFINYLNNRTEDAEGTNRTCDKGKPGPGPCVQRTYVACHIRQVVNDWYTVSKKVYAPPREGHLECNSSVTALYVAIDYNNKSGPINVTLSPQVRSIWAYELGDYKLVEITPIGFAPTDVRRYTGPTREKRVPFVLGFLGFLGAAGTAMGAAATTLTVQSRHLLAGILQQQKNLLAAVEQQQQLLKLTIWGVKNLNARVTALEKYLEDQARLNSWGCAWKQVCHTTVPWKYNNTPKWDNMTWLEWERQINALEGNITQLLEEAQNQESKNLDLYQKLDDWSGFWSWFSLSTWLGYVKIGFLVIVIILGLRFAWVLWGCIRNIRQGYNPLPQIHIHSSAERPDNGGGQDRGGESSSSKLIRLQEESSTPSRINNWWLNFKSCSLRIRTWCYNICLTLLIFIRTAVGYLQYGLQQLQEAATGLAQALARAAREAWGRLGAIVRSAYRAVINSPRRVRQGLEKVLG</sequence>
<organismHost>
    <name type="scientific">Cercopithecidae</name>
    <name type="common">Old World monkeys</name>
    <dbReference type="NCBI Taxonomy" id="9527"/>
</organismHost>
<evidence type="ECO:0000250" key="1"/>
<evidence type="ECO:0000255" key="2"/>
<evidence type="ECO:0000305" key="3"/>
<gene>
    <name type="primary">env</name>
</gene>
<dbReference type="EMBL" id="M66437">
    <property type="protein sequence ID" value="AAA91928.1"/>
    <property type="molecule type" value="Genomic_DNA"/>
</dbReference>
<dbReference type="EMBL" id="M58410">
    <property type="protein sequence ID" value="AAA47591.1"/>
    <property type="molecule type" value="Genomic_RNA"/>
</dbReference>
<dbReference type="RefSeq" id="NP_054372.1">
    <property type="nucleotide sequence ID" value="NC_001549.1"/>
</dbReference>
<dbReference type="SMR" id="Q02837"/>
<dbReference type="GlyCosmos" id="Q02837">
    <property type="glycosylation" value="23 sites, No reported glycans"/>
</dbReference>
<dbReference type="GeneID" id="1490007"/>
<dbReference type="KEGG" id="vg:1490007"/>
<dbReference type="Proteomes" id="UP000201112">
    <property type="component" value="Segment"/>
</dbReference>
<dbReference type="Proteomes" id="UP000257419">
    <property type="component" value="Segment"/>
</dbReference>
<dbReference type="GO" id="GO:0044175">
    <property type="term" value="C:host cell endosome membrane"/>
    <property type="evidence" value="ECO:0007669"/>
    <property type="project" value="UniProtKB-SubCell"/>
</dbReference>
<dbReference type="GO" id="GO:0020002">
    <property type="term" value="C:host cell plasma membrane"/>
    <property type="evidence" value="ECO:0007669"/>
    <property type="project" value="UniProtKB-SubCell"/>
</dbReference>
<dbReference type="GO" id="GO:0016020">
    <property type="term" value="C:membrane"/>
    <property type="evidence" value="ECO:0007669"/>
    <property type="project" value="UniProtKB-KW"/>
</dbReference>
<dbReference type="GO" id="GO:0019031">
    <property type="term" value="C:viral envelope"/>
    <property type="evidence" value="ECO:0007669"/>
    <property type="project" value="UniProtKB-KW"/>
</dbReference>
<dbReference type="GO" id="GO:0055036">
    <property type="term" value="C:virion membrane"/>
    <property type="evidence" value="ECO:0007669"/>
    <property type="project" value="UniProtKB-SubCell"/>
</dbReference>
<dbReference type="GO" id="GO:0005198">
    <property type="term" value="F:structural molecule activity"/>
    <property type="evidence" value="ECO:0007669"/>
    <property type="project" value="InterPro"/>
</dbReference>
<dbReference type="GO" id="GO:0039663">
    <property type="term" value="P:membrane fusion involved in viral entry into host cell"/>
    <property type="evidence" value="ECO:0007669"/>
    <property type="project" value="UniProtKB-KW"/>
</dbReference>
<dbReference type="GO" id="GO:0046718">
    <property type="term" value="P:symbiont entry into host cell"/>
    <property type="evidence" value="ECO:0007669"/>
    <property type="project" value="UniProtKB-KW"/>
</dbReference>
<dbReference type="GO" id="GO:0019062">
    <property type="term" value="P:virion attachment to host cell"/>
    <property type="evidence" value="ECO:0007669"/>
    <property type="project" value="UniProtKB-KW"/>
</dbReference>
<dbReference type="CDD" id="cd09909">
    <property type="entry name" value="HIV-1-like_HR1-HR2"/>
    <property type="match status" value="1"/>
</dbReference>
<dbReference type="Gene3D" id="1.10.287.210">
    <property type="match status" value="1"/>
</dbReference>
<dbReference type="Gene3D" id="2.170.40.20">
    <property type="entry name" value="Human immunodeficiency virus 1, Gp160, envelope glycoprotein"/>
    <property type="match status" value="2"/>
</dbReference>
<dbReference type="InterPro" id="IPR036377">
    <property type="entry name" value="Gp120_core_sf"/>
</dbReference>
<dbReference type="InterPro" id="IPR000328">
    <property type="entry name" value="GP41-like"/>
</dbReference>
<dbReference type="InterPro" id="IPR000777">
    <property type="entry name" value="HIV1_Gp120"/>
</dbReference>
<dbReference type="Pfam" id="PF00516">
    <property type="entry name" value="GP120"/>
    <property type="match status" value="1"/>
</dbReference>
<dbReference type="Pfam" id="PF00517">
    <property type="entry name" value="GP41"/>
    <property type="match status" value="1"/>
</dbReference>
<dbReference type="SUPFAM" id="SSF56502">
    <property type="entry name" value="gp120 core"/>
    <property type="match status" value="1"/>
</dbReference>
<dbReference type="SUPFAM" id="SSF58069">
    <property type="entry name" value="Virus ectodomain"/>
    <property type="match status" value="1"/>
</dbReference>
<protein>
    <recommendedName>
        <fullName>Envelope glycoprotein gp160</fullName>
    </recommendedName>
    <alternativeName>
        <fullName>Env polyprotein</fullName>
    </alternativeName>
    <component>
        <recommendedName>
            <fullName>Surface protein gp120</fullName>
            <shortName>SU</shortName>
        </recommendedName>
        <alternativeName>
            <fullName>Glycoprotein 120</fullName>
            <shortName>gp120</shortName>
        </alternativeName>
    </component>
    <component>
        <recommendedName>
            <fullName>Transmembrane protein gp41</fullName>
            <shortName>TM</shortName>
        </recommendedName>
        <alternativeName>
            <fullName>Glycoprotein 32</fullName>
            <shortName>gp32</shortName>
        </alternativeName>
    </component>
</protein>
<organism>
    <name type="scientific">Simian immunodeficiency virus agm.grivet (isolate AGM gr-1)</name>
    <name type="common">SIV-agm.gri</name>
    <name type="synonym">Simian immunodeficiency virus African green monkey grivet</name>
    <dbReference type="NCBI Taxonomy" id="31684"/>
    <lineage>
        <taxon>Viruses</taxon>
        <taxon>Riboviria</taxon>
        <taxon>Pararnavirae</taxon>
        <taxon>Artverviricota</taxon>
        <taxon>Revtraviricetes</taxon>
        <taxon>Ortervirales</taxon>
        <taxon>Retroviridae</taxon>
        <taxon>Orthoretrovirinae</taxon>
        <taxon>Lentivirus</taxon>
        <taxon>Simian immunodeficiency virus</taxon>
    </lineage>
</organism>
<keyword id="KW-0053">Apoptosis</keyword>
<keyword id="KW-0165">Cleavage on pair of basic residues</keyword>
<keyword id="KW-0175">Coiled coil</keyword>
<keyword id="KW-1015">Disulfide bond</keyword>
<keyword id="KW-1168">Fusion of virus membrane with host membrane</keyword>
<keyword id="KW-0325">Glycoprotein</keyword>
<keyword id="KW-1032">Host cell membrane</keyword>
<keyword id="KW-1039">Host endosome</keyword>
<keyword id="KW-1043">Host membrane</keyword>
<keyword id="KW-0945">Host-virus interaction</keyword>
<keyword id="KW-0472">Membrane</keyword>
<keyword id="KW-0732">Signal</keyword>
<keyword id="KW-0812">Transmembrane</keyword>
<keyword id="KW-1133">Transmembrane helix</keyword>
<keyword id="KW-1161">Viral attachment to host cell</keyword>
<keyword id="KW-0261">Viral envelope protein</keyword>
<keyword id="KW-1162">Viral penetration into host cytoplasm</keyword>
<keyword id="KW-0946">Virion</keyword>
<keyword id="KW-1160">Virus entry into host cell</keyword>
<name>ENV_SIVG1</name>
<comment type="function">
    <text evidence="1">The surface protein gp120 (SU) attaches the virus to the host lymphoid cell by binding to the primary receptor CD4. This interaction induces a structural rearrangement creating a high affinity binding site for a chemokine coreceptor like CCR5. This peculiar 2 stage receptor-interaction strategy allows gp120 to maintain the highly conserved coreceptor-binding site in a cryptic conformation, protected from neutralizing antibodies. These changes are transmitted to the transmembrane protein gp41 and are thought to activate its fusogenic potential by unmasking its fusion peptide (By similarity).</text>
</comment>
<comment type="function">
    <text evidence="1">Surface protein gp120 (SU) may target the virus to gut-associated lymphoid tissue (GALT) by binding host ITGA4/ITGB7 (alpha-4/beta-7 integrins), a complex that mediates T-cell migration to the GALT. Interaction between gp120 and ITGA4/ITGB7 would allow the virus to enter GALT early in the infection, infecting and killing most of GALT's resting CD4+ T-cells. This T-cell depletion is believed to be the major insult to the host immune system leading to AIDS (By similarity).</text>
</comment>
<comment type="function">
    <text evidence="1">The surface protein gp120 is a ligand for CD209/DC-SIGN and CLEC4M/DC-SIGNR, which are respectively found on dendritic cells (DCs), and on endothelial cells of liver sinusoids and lymph node sinuses. These interactions allow capture of viral particles at mucosal surfaces by these cells and subsequent transmission to permissive cells. DCs are professional antigen presenting cells, critical for host immunity by inducing specific immune responses against a broad variety of pathogens. They act as sentinels in various tissues where they take up antigen, process it, and present it to T-cells following migration to lymphoid organs. SIV subverts the migration properties of dendritic cells to gain access to CD4+ T-cells in lymph nodes. Virus transmission to permissive T-cells occurs either in trans (without DCs infection, through viral capture and transmission), or in cis (following DCs productive infection, through the usual CD4-gp120 interaction), thereby inducing a robust infection. In trans infection, bound virions remain infectious over days and it is proposed that they are not degraded, but protected in non-lysosomal acidic organelles within the DCs close to the cell membrane thus contributing to the viral infectious potential during DCs' migration from the periphery to the lymphoid tissues. On arrival at lymphoid tissues, intact virions recycle back to DCs' cell surface allowing virus transmission to CD4+ T-cells. Virion capture also seems to lead to MHC-II-restricted viral antigen presentation, and probably to the activation of SIV-specific CD4+ cells (By similarity).</text>
</comment>
<comment type="function">
    <text evidence="1">The transmembrane protein gp41 (TM) acts as a class I viral fusion protein. Under the current model, the protein has at least 3 conformational states: pre-fusion native state, pre-hairpin intermediate state, and post-fusion hairpin state. During fusion of viral and target intracellular membranes, the coiled coil regions (heptad repeats) assume a trimer-of-hairpins structure, positioning the fusion peptide in close proximity to the C-terminal region of the ectodomain. The formation of this structure appears to drive apposition and subsequent fusion of viral and target cell membranes. Complete fusion occurs in host cell endosomes. The virus undergoes clathrin-dependent internalization long before endosomal fusion, thus minimizing the surface exposure of conserved viral epitopes during fusion and reducing the efficacy of inhibitors targeting these epitopes. Membranes fusion leads to delivery of the nucleocapsid into the cytoplasm (By similarity).</text>
</comment>
<comment type="function">
    <text evidence="1">The envelope glycoprotein gp160 precursor down-modulates cell surface CD4 antigen by interacting with it in the endoplasmic reticulum and blocking its transport to the cell surface.</text>
</comment>
<comment type="function">
    <text evidence="1">The gp120-gp41 heterodimer allows rapid transcytosis of the virus through CD4 negative cells such as simple epithelial monolayers of the intestinal, rectal and endocervical epithelial barriers. Both gp120 and gp41 specifically recognize glycosphingolipids galactosyl-ceramide (GalCer) or 3' sulfo-galactosyl-ceramide (GalS) present in the lipid rafts structures of epithelial cells. Binding to these alternative receptors allows the rapid transcytosis of the virus through the epithelial cells. This transcytotic vesicle-mediated transport of virions from the apical side to the basolateral side of the epithelial cells does not involve infection of the cells themselves (By similarity).</text>
</comment>
<comment type="subunit">
    <molecule>Surface protein gp120</molecule>
    <text evidence="1">The mature envelope protein (Env) consists of a homotrimer of non-covalently associated gp120-gp41 heterodimers. The resulting complex protrudes from the virus surface as a spike. Interacts with host CD4 and CCR5 (By similarity). Gp120 also interacts with the C-type lectins CD209/DC-SIGN and CLEC4M/DC-SIGNR (collectively referred to as DC-SIGN(R)).</text>
</comment>
<comment type="subunit">
    <molecule>Transmembrane protein gp41</molecule>
    <text evidence="1">The mature envelope protein (Env) consists of a homotrimer of non-covalently associated gp120-gp41 heterodimers. The resulting complex protrudes from the virus surface as a spike.</text>
</comment>
<comment type="subcellular location">
    <molecule>Transmembrane protein gp41</molecule>
    <subcellularLocation>
        <location evidence="1">Virion membrane</location>
        <topology evidence="1">Single-pass type I membrane protein</topology>
    </subcellularLocation>
    <subcellularLocation>
        <location evidence="1">Host cell membrane</location>
        <topology evidence="1">Single-pass type I membrane protein</topology>
    </subcellularLocation>
    <subcellularLocation>
        <location evidence="3">Host endosome membrane</location>
        <topology evidence="3">Single-pass type I membrane protein</topology>
    </subcellularLocation>
    <text evidence="1">It is probably concentrated at the site of budding and incorporated into the virions possibly by contacts between the cytoplasmic tail of Env and the N-terminus of Gag.</text>
</comment>
<comment type="subcellular location">
    <molecule>Surface protein gp120</molecule>
    <subcellularLocation>
        <location evidence="1">Virion membrane</location>
        <topology evidence="1">Peripheral membrane protein</topology>
    </subcellularLocation>
    <subcellularLocation>
        <location evidence="1">Host cell membrane</location>
        <topology evidence="1">Peripheral membrane protein</topology>
    </subcellularLocation>
    <subcellularLocation>
        <location evidence="3">Host endosome membrane</location>
        <topology evidence="3">Peripheral membrane protein</topology>
    </subcellularLocation>
    <text evidence="1">The surface protein is not anchored to the viral envelope, but associates with the extravirion surface through its binding to TM. It is probably concentrated at the site of budding and incorporated into the virions possibly by contacts between the cytoplasmic tail of Env and the N-terminus of Gag (By similarity).</text>
</comment>
<comment type="domain">
    <text evidence="1">Some of the most genetically diverse regions of the viral genome are present in Env. They are called variable regions 1 through 5 (V1 through V5) (By similarity).</text>
</comment>
<comment type="domain">
    <text evidence="1">The YXXL motif is involved in determining the exact site of viral release at the surface of infected mononuclear cells and promotes endocytosis.</text>
</comment>
<comment type="domain">
    <text evidence="1">The 17 amino acids long immunosuppressive region is present in many retroviral envelope proteins. Synthetic peptides derived from this relatively conserved sequence inhibit immune function in vitro and in vivo (By similarity).</text>
</comment>
<comment type="PTM">
    <text evidence="1">Specific enzymatic cleavages in vivo yield mature proteins. Envelope glycoproteins are synthesized as an inactive precursor that is heavily N-glycosylated and processed likely by host cell furin in the Golgi to yield the mature SU and TM proteins. The cleavage site between SU and TM requires the minimal sequence [KR]-X-[KR]-R (By similarity).</text>
</comment>
<comment type="miscellaneous">
    <text>This is an African green monkey isolate.</text>
</comment>
<feature type="signal peptide" evidence="2">
    <location>
        <begin position="1"/>
        <end position="20"/>
    </location>
</feature>
<feature type="chain" id="PRO_0000239507" description="Envelope glycoprotein gp160">
    <location>
        <begin position="21"/>
        <end position="854"/>
    </location>
</feature>
<feature type="chain" id="PRO_0000038460" description="Surface protein gp120" evidence="1">
    <location>
        <begin position="21"/>
        <end position="522"/>
    </location>
</feature>
<feature type="chain" id="PRO_0000038461" description="Transmembrane protein gp41" evidence="1">
    <location>
        <begin position="523"/>
        <end position="854"/>
    </location>
</feature>
<feature type="topological domain" description="Extracellular" evidence="2">
    <location>
        <begin position="21"/>
        <end position="705"/>
    </location>
</feature>
<feature type="transmembrane region" description="Helical" evidence="2">
    <location>
        <begin position="706"/>
        <end position="726"/>
    </location>
</feature>
<feature type="topological domain" description="Cytoplasmic" evidence="2">
    <location>
        <begin position="727"/>
        <end position="854"/>
    </location>
</feature>
<feature type="region of interest" description="V1">
    <location>
        <begin position="111"/>
        <end position="153"/>
    </location>
</feature>
<feature type="region of interest" description="V2">
    <location>
        <begin position="154"/>
        <end position="198"/>
    </location>
</feature>
<feature type="region of interest" description="V3">
    <location>
        <begin position="300"/>
        <end position="332"/>
    </location>
</feature>
<feature type="region of interest" description="V4">
    <location>
        <begin position="389"/>
        <end position="430"/>
    </location>
</feature>
<feature type="region of interest" description="V5">
    <location>
        <begin position="473"/>
        <end position="481"/>
    </location>
</feature>
<feature type="region of interest" description="Fusion peptide" evidence="2">
    <location>
        <begin position="523"/>
        <end position="543"/>
    </location>
</feature>
<feature type="region of interest" description="Immunosuppression" evidence="1">
    <location>
        <begin position="586"/>
        <end position="602"/>
    </location>
</feature>
<feature type="region of interest" description="MPER; binding to GalCer" evidence="1">
    <location>
        <begin position="667"/>
        <end position="688"/>
    </location>
</feature>
<feature type="coiled-coil region" evidence="2">
    <location>
        <begin position="633"/>
        <end position="672"/>
    </location>
</feature>
<feature type="short sequence motif" description="YXXL motif; contains endocytosis signal" evidence="1">
    <location>
        <begin position="717"/>
        <end position="720"/>
    </location>
</feature>
<feature type="site" description="Cleavage; by host furin" evidence="2">
    <location>
        <begin position="522"/>
        <end position="523"/>
    </location>
</feature>
<feature type="glycosylation site" description="N-linked (GlcNAc...) asparagine; by host" evidence="2">
    <location>
        <position position="35"/>
    </location>
</feature>
<feature type="glycosylation site" description="N-linked (GlcNAc...) asparagine; by host" evidence="2">
    <location>
        <position position="68"/>
    </location>
</feature>
<feature type="glycosylation site" description="N-linked (GlcNAc...) asparagine; by host" evidence="2">
    <location>
        <position position="115"/>
    </location>
</feature>
<feature type="glycosylation site" description="N-linked (GlcNAc...) asparagine; by host" evidence="2">
    <location>
        <position position="136"/>
    </location>
</feature>
<feature type="glycosylation site" description="N-linked (GlcNAc...) asparagine; by host" evidence="2">
    <location>
        <position position="153"/>
    </location>
</feature>
<feature type="glycosylation site" description="N-linked (GlcNAc...) asparagine; by host" evidence="2">
    <location>
        <position position="168"/>
    </location>
</feature>
<feature type="glycosylation site" description="N-linked (GlcNAc...) asparagine; by host" evidence="2">
    <location>
        <position position="182"/>
    </location>
</feature>
<feature type="glycosylation site" description="N-linked (GlcNAc...) asparagine; by host" evidence="2">
    <location>
        <position position="199"/>
    </location>
</feature>
<feature type="glycosylation site" description="N-linked (GlcNAc...) asparagine; by host" evidence="2">
    <location>
        <position position="244"/>
    </location>
</feature>
<feature type="glycosylation site" description="N-linked (GlcNAc...) asparagine; by host" evidence="2">
    <location>
        <position position="255"/>
    </location>
</feature>
<feature type="glycosylation site" description="N-linked (GlcNAc...) asparagine; by host" evidence="2">
    <location>
        <position position="265"/>
    </location>
</feature>
<feature type="glycosylation site" description="N-linked (GlcNAc...) asparagine; by host" evidence="2">
    <location>
        <position position="271"/>
    </location>
</feature>
<feature type="glycosylation site" description="N-linked (GlcNAc...) asparagine; by host" evidence="2">
    <location>
        <position position="283"/>
    </location>
</feature>
<feature type="glycosylation site" description="N-linked (GlcNAc...) asparagine; by host" evidence="2">
    <location>
        <position position="295"/>
    </location>
</feature>
<feature type="glycosylation site" description="N-linked (GlcNAc...) asparagine; by host" evidence="2">
    <location>
        <position position="305"/>
    </location>
</feature>
<feature type="glycosylation site" description="N-linked (GlcNAc...) asparagine; by host" evidence="2">
    <location>
        <position position="355"/>
    </location>
</feature>
<feature type="glycosylation site" description="N-linked (GlcNAc...) asparagine; by host" evidence="2">
    <location>
        <position position="400"/>
    </location>
</feature>
<feature type="glycosylation site" description="N-linked (GlcNAc...) asparagine; by host" evidence="2">
    <location>
        <position position="409"/>
    </location>
</feature>
<feature type="glycosylation site" description="N-linked (GlcNAc...) asparagine; by host" evidence="2">
    <location>
        <position position="458"/>
    </location>
</feature>
<feature type="glycosylation site" description="N-linked (GlcNAc...) asparagine; by host" evidence="2">
    <location>
        <position position="472"/>
    </location>
</feature>
<feature type="glycosylation site" description="N-linked (GlcNAc...) asparagine; by host" evidence="2">
    <location>
        <position position="478"/>
    </location>
</feature>
<feature type="glycosylation site" description="N-linked (GlcNAc...) asparagine; by host" evidence="2">
    <location>
        <position position="630"/>
    </location>
</feature>
<feature type="glycosylation site" description="N-linked (GlcNAc...) asparagine; by host" evidence="2">
    <location>
        <position position="646"/>
    </location>
</feature>
<feature type="disulfide bond" evidence="1">
    <location>
        <begin position="42"/>
        <end position="55"/>
    </location>
</feature>
<feature type="disulfide bond" evidence="1">
    <location>
        <begin position="99"/>
        <end position="207"/>
    </location>
</feature>
<feature type="disulfide bond" evidence="1">
    <location>
        <begin position="106"/>
        <end position="198"/>
    </location>
</feature>
<feature type="disulfide bond" evidence="1">
    <location>
        <begin position="111"/>
        <end position="154"/>
    </location>
</feature>
<feature type="disulfide bond" evidence="1">
    <location>
        <begin position="220"/>
        <end position="250"/>
    </location>
</feature>
<feature type="disulfide bond" evidence="1">
    <location>
        <begin position="230"/>
        <end position="242"/>
    </location>
</feature>
<feature type="disulfide bond" evidence="1">
    <location>
        <begin position="300"/>
        <end position="333"/>
    </location>
</feature>
<feature type="disulfide bond" evidence="1">
    <location>
        <begin position="382"/>
        <end position="457"/>
    </location>
</feature>
<feature type="disulfide bond" evidence="1">
    <location>
        <begin position="389"/>
        <end position="430"/>
    </location>
</feature>
<reference key="1">
    <citation type="journal article" date="1991" name="Virology">
        <title>A highly divergent proviral DNA clone of SIV from a distinct species of African green monkey.</title>
        <authorList>
            <person name="Fomsgaard A."/>
            <person name="Hirsch V.M."/>
            <person name="Allan J.S."/>
            <person name="Johnson P.R."/>
        </authorList>
    </citation>
    <scope>NUCLEOTIDE SEQUENCE [GENOMIC DNA]</scope>
</reference>
<proteinExistence type="inferred from homology"/>